<proteinExistence type="inferred from homology"/>
<accession>Q042R4</accession>
<sequence length="375" mass="41987">MVDNSEIRVVVGMSGGVDSSVSALLLKQQGFDVVGVFMKNWDDTDDSGVCTATEDYEDVKKVADEIGIPYYSINFEKDYWERVFEYFLNEYKKGRTPNPDVMCNKEIKFKSFLDFAMDLDADYIAMGHYAATKVDENGIVHMMRPKDGNKDQTYFLSQLSQDQLKKVIFPLANLTKPQVREIAIDAGLATAKKKDSTGICFIGERNFKKFLSEFLPAQSGKMVTPDGKVVGEHAGLMYYTIGQRSGLGLGSTKESTDPWFVVGKDLKKNELIVEQGYDSKLLYATSLDASGVSFFTGQPEHDIDLKCTAKFRYRQPDVGVTMHYHAKDNTVHVEFDEPARAVTPGQAIVFYNGEECLGGATIDRAYQNEKQLQLV</sequence>
<comment type="function">
    <text evidence="1">Catalyzes the 2-thiolation of uridine at the wobble position (U34) of tRNA, leading to the formation of s(2)U34.</text>
</comment>
<comment type="catalytic activity">
    <reaction evidence="1">
        <text>S-sulfanyl-L-cysteinyl-[protein] + uridine(34) in tRNA + AH2 + ATP = 2-thiouridine(34) in tRNA + L-cysteinyl-[protein] + A + AMP + diphosphate + H(+)</text>
        <dbReference type="Rhea" id="RHEA:47032"/>
        <dbReference type="Rhea" id="RHEA-COMP:10131"/>
        <dbReference type="Rhea" id="RHEA-COMP:11726"/>
        <dbReference type="Rhea" id="RHEA-COMP:11727"/>
        <dbReference type="Rhea" id="RHEA-COMP:11728"/>
        <dbReference type="ChEBI" id="CHEBI:13193"/>
        <dbReference type="ChEBI" id="CHEBI:15378"/>
        <dbReference type="ChEBI" id="CHEBI:17499"/>
        <dbReference type="ChEBI" id="CHEBI:29950"/>
        <dbReference type="ChEBI" id="CHEBI:30616"/>
        <dbReference type="ChEBI" id="CHEBI:33019"/>
        <dbReference type="ChEBI" id="CHEBI:61963"/>
        <dbReference type="ChEBI" id="CHEBI:65315"/>
        <dbReference type="ChEBI" id="CHEBI:87170"/>
        <dbReference type="ChEBI" id="CHEBI:456215"/>
        <dbReference type="EC" id="2.8.1.13"/>
    </reaction>
</comment>
<comment type="subcellular location">
    <subcellularLocation>
        <location evidence="1">Cytoplasm</location>
    </subcellularLocation>
</comment>
<comment type="similarity">
    <text evidence="1">Belongs to the MnmA/TRMU family.</text>
</comment>
<comment type="sequence caution" evidence="2">
    <conflict type="erroneous initiation">
        <sequence resource="EMBL-CDS" id="ABJ60558"/>
    </conflict>
</comment>
<dbReference type="EC" id="2.8.1.13" evidence="1"/>
<dbReference type="EMBL" id="CP000413">
    <property type="protein sequence ID" value="ABJ60558.1"/>
    <property type="status" value="ALT_INIT"/>
    <property type="molecule type" value="Genomic_DNA"/>
</dbReference>
<dbReference type="RefSeq" id="WP_003647116.1">
    <property type="nucleotide sequence ID" value="NZ_WBMG01000002.1"/>
</dbReference>
<dbReference type="SMR" id="Q042R4"/>
<dbReference type="GeneID" id="29638588"/>
<dbReference type="KEGG" id="lga:LGAS_1189"/>
<dbReference type="HOGENOM" id="CLU_035188_1_0_9"/>
<dbReference type="BioCyc" id="LGAS324831:G1G6Y-1185-MONOMER"/>
<dbReference type="Proteomes" id="UP000000664">
    <property type="component" value="Chromosome"/>
</dbReference>
<dbReference type="GO" id="GO:0005737">
    <property type="term" value="C:cytoplasm"/>
    <property type="evidence" value="ECO:0007669"/>
    <property type="project" value="UniProtKB-SubCell"/>
</dbReference>
<dbReference type="GO" id="GO:0005524">
    <property type="term" value="F:ATP binding"/>
    <property type="evidence" value="ECO:0007669"/>
    <property type="project" value="UniProtKB-KW"/>
</dbReference>
<dbReference type="GO" id="GO:0000049">
    <property type="term" value="F:tRNA binding"/>
    <property type="evidence" value="ECO:0007669"/>
    <property type="project" value="UniProtKB-KW"/>
</dbReference>
<dbReference type="GO" id="GO:0103016">
    <property type="term" value="F:tRNA-uridine 2-sulfurtransferase activity"/>
    <property type="evidence" value="ECO:0007669"/>
    <property type="project" value="UniProtKB-EC"/>
</dbReference>
<dbReference type="GO" id="GO:0002143">
    <property type="term" value="P:tRNA wobble position uridine thiolation"/>
    <property type="evidence" value="ECO:0007669"/>
    <property type="project" value="TreeGrafter"/>
</dbReference>
<dbReference type="CDD" id="cd01998">
    <property type="entry name" value="MnmA_TRMU-like"/>
    <property type="match status" value="1"/>
</dbReference>
<dbReference type="FunFam" id="2.30.30.280:FF:000001">
    <property type="entry name" value="tRNA-specific 2-thiouridylase MnmA"/>
    <property type="match status" value="1"/>
</dbReference>
<dbReference type="FunFam" id="2.40.30.10:FF:000023">
    <property type="entry name" value="tRNA-specific 2-thiouridylase MnmA"/>
    <property type="match status" value="1"/>
</dbReference>
<dbReference type="FunFam" id="3.40.50.620:FF:000004">
    <property type="entry name" value="tRNA-specific 2-thiouridylase MnmA"/>
    <property type="match status" value="1"/>
</dbReference>
<dbReference type="Gene3D" id="2.30.30.280">
    <property type="entry name" value="Adenine nucleotide alpha hydrolases-like domains"/>
    <property type="match status" value="1"/>
</dbReference>
<dbReference type="Gene3D" id="3.40.50.620">
    <property type="entry name" value="HUPs"/>
    <property type="match status" value="1"/>
</dbReference>
<dbReference type="Gene3D" id="2.40.30.10">
    <property type="entry name" value="Translation factors"/>
    <property type="match status" value="1"/>
</dbReference>
<dbReference type="HAMAP" id="MF_00144">
    <property type="entry name" value="tRNA_thiouridyl_MnmA"/>
    <property type="match status" value="1"/>
</dbReference>
<dbReference type="InterPro" id="IPR004506">
    <property type="entry name" value="MnmA-like"/>
</dbReference>
<dbReference type="InterPro" id="IPR046885">
    <property type="entry name" value="MnmA-like_C"/>
</dbReference>
<dbReference type="InterPro" id="IPR046884">
    <property type="entry name" value="MnmA-like_central"/>
</dbReference>
<dbReference type="InterPro" id="IPR023382">
    <property type="entry name" value="MnmA-like_central_sf"/>
</dbReference>
<dbReference type="InterPro" id="IPR014729">
    <property type="entry name" value="Rossmann-like_a/b/a_fold"/>
</dbReference>
<dbReference type="NCBIfam" id="NF001138">
    <property type="entry name" value="PRK00143.1"/>
    <property type="match status" value="1"/>
</dbReference>
<dbReference type="NCBIfam" id="TIGR00420">
    <property type="entry name" value="trmU"/>
    <property type="match status" value="1"/>
</dbReference>
<dbReference type="PANTHER" id="PTHR11933:SF5">
    <property type="entry name" value="MITOCHONDRIAL TRNA-SPECIFIC 2-THIOURIDYLASE 1"/>
    <property type="match status" value="1"/>
</dbReference>
<dbReference type="PANTHER" id="PTHR11933">
    <property type="entry name" value="TRNA 5-METHYLAMINOMETHYL-2-THIOURIDYLATE -METHYLTRANSFERASE"/>
    <property type="match status" value="1"/>
</dbReference>
<dbReference type="Pfam" id="PF03054">
    <property type="entry name" value="tRNA_Me_trans"/>
    <property type="match status" value="1"/>
</dbReference>
<dbReference type="Pfam" id="PF20258">
    <property type="entry name" value="tRNA_Me_trans_C"/>
    <property type="match status" value="1"/>
</dbReference>
<dbReference type="Pfam" id="PF20259">
    <property type="entry name" value="tRNA_Me_trans_M"/>
    <property type="match status" value="1"/>
</dbReference>
<dbReference type="SUPFAM" id="SSF52402">
    <property type="entry name" value="Adenine nucleotide alpha hydrolases-like"/>
    <property type="match status" value="1"/>
</dbReference>
<protein>
    <recommendedName>
        <fullName evidence="1">tRNA-specific 2-thiouridylase MnmA</fullName>
        <ecNumber evidence="1">2.8.1.13</ecNumber>
    </recommendedName>
</protein>
<feature type="chain" id="PRO_0000349673" description="tRNA-specific 2-thiouridylase MnmA">
    <location>
        <begin position="1"/>
        <end position="375"/>
    </location>
</feature>
<feature type="region of interest" description="Interaction with target base in tRNA" evidence="1">
    <location>
        <begin position="98"/>
        <end position="100"/>
    </location>
</feature>
<feature type="region of interest" description="Interaction with tRNA" evidence="1">
    <location>
        <begin position="150"/>
        <end position="152"/>
    </location>
</feature>
<feature type="region of interest" description="Interaction with tRNA" evidence="1">
    <location>
        <begin position="312"/>
        <end position="313"/>
    </location>
</feature>
<feature type="active site" description="Nucleophile" evidence="1">
    <location>
        <position position="103"/>
    </location>
</feature>
<feature type="active site" description="Cysteine persulfide intermediate" evidence="1">
    <location>
        <position position="200"/>
    </location>
</feature>
<feature type="binding site" evidence="1">
    <location>
        <begin position="12"/>
        <end position="19"/>
    </location>
    <ligand>
        <name>ATP</name>
        <dbReference type="ChEBI" id="CHEBI:30616"/>
    </ligand>
</feature>
<feature type="binding site" evidence="1">
    <location>
        <position position="38"/>
    </location>
    <ligand>
        <name>ATP</name>
        <dbReference type="ChEBI" id="CHEBI:30616"/>
    </ligand>
</feature>
<feature type="binding site" evidence="1">
    <location>
        <position position="127"/>
    </location>
    <ligand>
        <name>ATP</name>
        <dbReference type="ChEBI" id="CHEBI:30616"/>
    </ligand>
</feature>
<feature type="site" description="Interaction with tRNA" evidence="1">
    <location>
        <position position="128"/>
    </location>
</feature>
<feature type="site" description="Interaction with tRNA" evidence="1">
    <location>
        <position position="346"/>
    </location>
</feature>
<feature type="disulfide bond" description="Alternate" evidence="1">
    <location>
        <begin position="103"/>
        <end position="200"/>
    </location>
</feature>
<keyword id="KW-0067">ATP-binding</keyword>
<keyword id="KW-0963">Cytoplasm</keyword>
<keyword id="KW-1015">Disulfide bond</keyword>
<keyword id="KW-0547">Nucleotide-binding</keyword>
<keyword id="KW-0694">RNA-binding</keyword>
<keyword id="KW-0808">Transferase</keyword>
<keyword id="KW-0819">tRNA processing</keyword>
<keyword id="KW-0820">tRNA-binding</keyword>
<evidence type="ECO:0000255" key="1">
    <source>
        <dbReference type="HAMAP-Rule" id="MF_00144"/>
    </source>
</evidence>
<evidence type="ECO:0000305" key="2"/>
<name>MNMA_LACGA</name>
<gene>
    <name evidence="1" type="primary">mnmA</name>
    <name type="ordered locus">LGAS_1189</name>
</gene>
<organism>
    <name type="scientific">Lactobacillus gasseri (strain ATCC 33323 / DSM 20243 / BCRC 14619 / CIP 102991 / JCM 1131 / KCTC 3163 / NCIMB 11718 / NCTC 13722 / AM63)</name>
    <dbReference type="NCBI Taxonomy" id="324831"/>
    <lineage>
        <taxon>Bacteria</taxon>
        <taxon>Bacillati</taxon>
        <taxon>Bacillota</taxon>
        <taxon>Bacilli</taxon>
        <taxon>Lactobacillales</taxon>
        <taxon>Lactobacillaceae</taxon>
        <taxon>Lactobacillus</taxon>
    </lineage>
</organism>
<reference key="1">
    <citation type="journal article" date="2006" name="Proc. Natl. Acad. Sci. U.S.A.">
        <title>Comparative genomics of the lactic acid bacteria.</title>
        <authorList>
            <person name="Makarova K.S."/>
            <person name="Slesarev A."/>
            <person name="Wolf Y.I."/>
            <person name="Sorokin A."/>
            <person name="Mirkin B."/>
            <person name="Koonin E.V."/>
            <person name="Pavlov A."/>
            <person name="Pavlova N."/>
            <person name="Karamychev V."/>
            <person name="Polouchine N."/>
            <person name="Shakhova V."/>
            <person name="Grigoriev I."/>
            <person name="Lou Y."/>
            <person name="Rohksar D."/>
            <person name="Lucas S."/>
            <person name="Huang K."/>
            <person name="Goodstein D.M."/>
            <person name="Hawkins T."/>
            <person name="Plengvidhya V."/>
            <person name="Welker D."/>
            <person name="Hughes J."/>
            <person name="Goh Y."/>
            <person name="Benson A."/>
            <person name="Baldwin K."/>
            <person name="Lee J.-H."/>
            <person name="Diaz-Muniz I."/>
            <person name="Dosti B."/>
            <person name="Smeianov V."/>
            <person name="Wechter W."/>
            <person name="Barabote R."/>
            <person name="Lorca G."/>
            <person name="Altermann E."/>
            <person name="Barrangou R."/>
            <person name="Ganesan B."/>
            <person name="Xie Y."/>
            <person name="Rawsthorne H."/>
            <person name="Tamir D."/>
            <person name="Parker C."/>
            <person name="Breidt F."/>
            <person name="Broadbent J.R."/>
            <person name="Hutkins R."/>
            <person name="O'Sullivan D."/>
            <person name="Steele J."/>
            <person name="Unlu G."/>
            <person name="Saier M.H. Jr."/>
            <person name="Klaenhammer T."/>
            <person name="Richardson P."/>
            <person name="Kozyavkin S."/>
            <person name="Weimer B.C."/>
            <person name="Mills D.A."/>
        </authorList>
    </citation>
    <scope>NUCLEOTIDE SEQUENCE [LARGE SCALE GENOMIC DNA]</scope>
    <source>
        <strain>ATCC 33323 / DSM 20243 / BCRC 14619 / CIP 102991 / JCM 1131 / KCTC 3163 / NCIMB 11718 / NCTC 13722 / AM63</strain>
    </source>
</reference>